<evidence type="ECO:0000255" key="1">
    <source>
        <dbReference type="HAMAP-Rule" id="MF_00075"/>
    </source>
</evidence>
<organism>
    <name type="scientific">Psilotum nudum</name>
    <name type="common">Whisk fern</name>
    <name type="synonym">Lycopodium nudum</name>
    <dbReference type="NCBI Taxonomy" id="3240"/>
    <lineage>
        <taxon>Eukaryota</taxon>
        <taxon>Viridiplantae</taxon>
        <taxon>Streptophyta</taxon>
        <taxon>Embryophyta</taxon>
        <taxon>Tracheophyta</taxon>
        <taxon>Polypodiopsida</taxon>
        <taxon>Ophioglossidae</taxon>
        <taxon>Psilotales</taxon>
        <taxon>Psilotaceae</taxon>
        <taxon>Psilotum</taxon>
    </lineage>
</organism>
<name>IF1C_PSINU</name>
<reference key="1">
    <citation type="journal article" date="2004" name="Mol. Biol. Evol.">
        <title>Chloroplast phylogeny indicates that bryophytes are monophyletic.</title>
        <authorList>
            <person name="Nishiyama T."/>
            <person name="Wolf P.G."/>
            <person name="Kugita M."/>
            <person name="Sinclair R.B."/>
            <person name="Sugita M."/>
            <person name="Sugiura C."/>
            <person name="Wakasugi T."/>
            <person name="Yamada K."/>
            <person name="Yoshinaga K."/>
            <person name="Yamaguchi K."/>
            <person name="Ueda K."/>
            <person name="Hasebe M."/>
        </authorList>
    </citation>
    <scope>NUCLEOTIDE SEQUENCE [LARGE SCALE GENOMIC DNA]</scope>
    <source>
        <strain>Kingyoku</strain>
    </source>
</reference>
<feature type="chain" id="PRO_0000095948" description="Translation initiation factor IF-1, chloroplastic">
    <location>
        <begin position="1"/>
        <end position="80"/>
    </location>
</feature>
<feature type="domain" description="S1-like" evidence="1">
    <location>
        <begin position="1"/>
        <end position="72"/>
    </location>
</feature>
<protein>
    <recommendedName>
        <fullName evidence="1">Translation initiation factor IF-1, chloroplastic</fullName>
    </recommendedName>
</protein>
<dbReference type="EMBL" id="AP004638">
    <property type="protein sequence ID" value="BAB84251.1"/>
    <property type="molecule type" value="Genomic_DNA"/>
</dbReference>
<dbReference type="RefSeq" id="NP_569663.1">
    <property type="nucleotide sequence ID" value="NC_003386.1"/>
</dbReference>
<dbReference type="SMR" id="Q8WHY8"/>
<dbReference type="GeneID" id="2545112"/>
<dbReference type="GO" id="GO:0009507">
    <property type="term" value="C:chloroplast"/>
    <property type="evidence" value="ECO:0007669"/>
    <property type="project" value="UniProtKB-SubCell"/>
</dbReference>
<dbReference type="GO" id="GO:0005829">
    <property type="term" value="C:cytosol"/>
    <property type="evidence" value="ECO:0007669"/>
    <property type="project" value="TreeGrafter"/>
</dbReference>
<dbReference type="GO" id="GO:0043022">
    <property type="term" value="F:ribosome binding"/>
    <property type="evidence" value="ECO:0007669"/>
    <property type="project" value="UniProtKB-UniRule"/>
</dbReference>
<dbReference type="GO" id="GO:0019843">
    <property type="term" value="F:rRNA binding"/>
    <property type="evidence" value="ECO:0007669"/>
    <property type="project" value="UniProtKB-UniRule"/>
</dbReference>
<dbReference type="GO" id="GO:0003743">
    <property type="term" value="F:translation initiation factor activity"/>
    <property type="evidence" value="ECO:0007669"/>
    <property type="project" value="UniProtKB-UniRule"/>
</dbReference>
<dbReference type="CDD" id="cd04451">
    <property type="entry name" value="S1_IF1"/>
    <property type="match status" value="1"/>
</dbReference>
<dbReference type="FunFam" id="2.40.50.140:FF:000002">
    <property type="entry name" value="Translation initiation factor IF-1"/>
    <property type="match status" value="1"/>
</dbReference>
<dbReference type="Gene3D" id="2.40.50.140">
    <property type="entry name" value="Nucleic acid-binding proteins"/>
    <property type="match status" value="1"/>
</dbReference>
<dbReference type="HAMAP" id="MF_00075">
    <property type="entry name" value="IF_1"/>
    <property type="match status" value="1"/>
</dbReference>
<dbReference type="InterPro" id="IPR012340">
    <property type="entry name" value="NA-bd_OB-fold"/>
</dbReference>
<dbReference type="InterPro" id="IPR006196">
    <property type="entry name" value="RNA-binding_domain_S1_IF1"/>
</dbReference>
<dbReference type="InterPro" id="IPR004368">
    <property type="entry name" value="TIF_IF1"/>
</dbReference>
<dbReference type="NCBIfam" id="TIGR00008">
    <property type="entry name" value="infA"/>
    <property type="match status" value="1"/>
</dbReference>
<dbReference type="PANTHER" id="PTHR33370">
    <property type="entry name" value="TRANSLATION INITIATION FACTOR IF-1, CHLOROPLASTIC"/>
    <property type="match status" value="1"/>
</dbReference>
<dbReference type="PANTHER" id="PTHR33370:SF1">
    <property type="entry name" value="TRANSLATION INITIATION FACTOR IF-1, CHLOROPLASTIC"/>
    <property type="match status" value="1"/>
</dbReference>
<dbReference type="Pfam" id="PF01176">
    <property type="entry name" value="eIF-1a"/>
    <property type="match status" value="1"/>
</dbReference>
<dbReference type="SUPFAM" id="SSF50249">
    <property type="entry name" value="Nucleic acid-binding proteins"/>
    <property type="match status" value="1"/>
</dbReference>
<dbReference type="PROSITE" id="PS50832">
    <property type="entry name" value="S1_IF1_TYPE"/>
    <property type="match status" value="1"/>
</dbReference>
<proteinExistence type="inferred from homology"/>
<geneLocation type="chloroplast"/>
<keyword id="KW-0150">Chloroplast</keyword>
<keyword id="KW-0396">Initiation factor</keyword>
<keyword id="KW-0934">Plastid</keyword>
<keyword id="KW-0648">Protein biosynthesis</keyword>
<keyword id="KW-0694">RNA-binding</keyword>
<keyword id="KW-0699">rRNA-binding</keyword>
<comment type="function">
    <text evidence="1">One of the essential components for the initiation of protein synthesis. Stabilizes the binding of IF-2 and IF-3 on the 30S subunit to which N-formylmethionyl-tRNA(fMet) subsequently binds. Helps modulate mRNA selection, yielding the 30S pre-initiation complex (PIC). Upon addition of the 50S ribosomal subunit IF-1, IF-2 and IF-3 are released leaving the mature 70S translation initiation complex.</text>
</comment>
<comment type="subunit">
    <text evidence="1">Component of the 30S ribosomal translation pre-initiation complex which assembles on the 30S ribosome in the order IF-2 and IF-3, IF-1 and N-formylmethionyl-tRNA(fMet); mRNA recruitment can occur at any time during PIC assembly.</text>
</comment>
<comment type="subcellular location">
    <subcellularLocation>
        <location evidence="1">Plastid</location>
        <location evidence="1">Chloroplast</location>
    </subcellularLocation>
</comment>
<comment type="similarity">
    <text evidence="1">Belongs to the IF-1 family.</text>
</comment>
<sequence>MKEHDLINMEGIVTESLPNAMFRVFLDNGCHVLTHISGKIRRNYIRILPGDRVKVELSIYDLTKGRILYRIRNEASKDTL</sequence>
<gene>
    <name evidence="1" type="primary">infA</name>
</gene>
<accession>Q8WHY8</accession>